<protein>
    <recommendedName>
        <fullName evidence="1">RNA-binding protein Hfq</fullName>
    </recommendedName>
</protein>
<sequence>MAEKFNLQDRFLNHLRVNKIEVKVYLVNGFQTKGFIRSFDSYTVLLESGNQQSLIYKHAISTIIPSSYVMLMPRKQETAQEAETSENEGS</sequence>
<dbReference type="EMBL" id="CP000702">
    <property type="protein sequence ID" value="ABQ46421.1"/>
    <property type="molecule type" value="Genomic_DNA"/>
</dbReference>
<dbReference type="RefSeq" id="WP_008192227.1">
    <property type="nucleotide sequence ID" value="NC_009486.1"/>
</dbReference>
<dbReference type="SMR" id="A5IJP8"/>
<dbReference type="STRING" id="390874.Tpet_0395"/>
<dbReference type="KEGG" id="tpt:Tpet_0395"/>
<dbReference type="eggNOG" id="COG1923">
    <property type="taxonomic scope" value="Bacteria"/>
</dbReference>
<dbReference type="HOGENOM" id="CLU_113688_0_2_0"/>
<dbReference type="Proteomes" id="UP000006558">
    <property type="component" value="Chromosome"/>
</dbReference>
<dbReference type="GO" id="GO:0005829">
    <property type="term" value="C:cytosol"/>
    <property type="evidence" value="ECO:0007669"/>
    <property type="project" value="TreeGrafter"/>
</dbReference>
<dbReference type="GO" id="GO:0003723">
    <property type="term" value="F:RNA binding"/>
    <property type="evidence" value="ECO:0007669"/>
    <property type="project" value="UniProtKB-UniRule"/>
</dbReference>
<dbReference type="GO" id="GO:0006355">
    <property type="term" value="P:regulation of DNA-templated transcription"/>
    <property type="evidence" value="ECO:0007669"/>
    <property type="project" value="InterPro"/>
</dbReference>
<dbReference type="GO" id="GO:0043487">
    <property type="term" value="P:regulation of RNA stability"/>
    <property type="evidence" value="ECO:0007669"/>
    <property type="project" value="TreeGrafter"/>
</dbReference>
<dbReference type="GO" id="GO:0045974">
    <property type="term" value="P:regulation of translation, ncRNA-mediated"/>
    <property type="evidence" value="ECO:0007669"/>
    <property type="project" value="TreeGrafter"/>
</dbReference>
<dbReference type="CDD" id="cd01716">
    <property type="entry name" value="Hfq"/>
    <property type="match status" value="1"/>
</dbReference>
<dbReference type="FunFam" id="2.30.30.100:FF:000012">
    <property type="entry name" value="RNA-binding protein Hfq"/>
    <property type="match status" value="1"/>
</dbReference>
<dbReference type="Gene3D" id="2.30.30.100">
    <property type="match status" value="1"/>
</dbReference>
<dbReference type="HAMAP" id="MF_00436">
    <property type="entry name" value="Hfq"/>
    <property type="match status" value="1"/>
</dbReference>
<dbReference type="InterPro" id="IPR005001">
    <property type="entry name" value="Hfq"/>
</dbReference>
<dbReference type="InterPro" id="IPR010920">
    <property type="entry name" value="LSM_dom_sf"/>
</dbReference>
<dbReference type="InterPro" id="IPR047575">
    <property type="entry name" value="Sm"/>
</dbReference>
<dbReference type="NCBIfam" id="TIGR02383">
    <property type="entry name" value="Hfq"/>
    <property type="match status" value="1"/>
</dbReference>
<dbReference type="NCBIfam" id="NF001602">
    <property type="entry name" value="PRK00395.1"/>
    <property type="match status" value="1"/>
</dbReference>
<dbReference type="PANTHER" id="PTHR34772">
    <property type="entry name" value="RNA-BINDING PROTEIN HFQ"/>
    <property type="match status" value="1"/>
</dbReference>
<dbReference type="PANTHER" id="PTHR34772:SF1">
    <property type="entry name" value="RNA-BINDING PROTEIN HFQ"/>
    <property type="match status" value="1"/>
</dbReference>
<dbReference type="Pfam" id="PF17209">
    <property type="entry name" value="Hfq"/>
    <property type="match status" value="1"/>
</dbReference>
<dbReference type="SUPFAM" id="SSF50182">
    <property type="entry name" value="Sm-like ribonucleoproteins"/>
    <property type="match status" value="1"/>
</dbReference>
<dbReference type="PROSITE" id="PS52002">
    <property type="entry name" value="SM"/>
    <property type="match status" value="1"/>
</dbReference>
<organism>
    <name type="scientific">Thermotoga petrophila (strain ATCC BAA-488 / DSM 13995 / JCM 10881 / RKU-1)</name>
    <dbReference type="NCBI Taxonomy" id="390874"/>
    <lineage>
        <taxon>Bacteria</taxon>
        <taxon>Thermotogati</taxon>
        <taxon>Thermotogota</taxon>
        <taxon>Thermotogae</taxon>
        <taxon>Thermotogales</taxon>
        <taxon>Thermotogaceae</taxon>
        <taxon>Thermotoga</taxon>
    </lineage>
</organism>
<evidence type="ECO:0000255" key="1">
    <source>
        <dbReference type="HAMAP-Rule" id="MF_00436"/>
    </source>
</evidence>
<evidence type="ECO:0000255" key="2">
    <source>
        <dbReference type="PROSITE-ProRule" id="PRU01346"/>
    </source>
</evidence>
<feature type="chain" id="PRO_1000080692" description="RNA-binding protein Hfq">
    <location>
        <begin position="1"/>
        <end position="90"/>
    </location>
</feature>
<feature type="domain" description="Sm" evidence="2">
    <location>
        <begin position="9"/>
        <end position="69"/>
    </location>
</feature>
<name>HFQ_THEP1</name>
<keyword id="KW-0694">RNA-binding</keyword>
<keyword id="KW-0346">Stress response</keyword>
<reference key="1">
    <citation type="submission" date="2007-05" db="EMBL/GenBank/DDBJ databases">
        <title>Complete sequence of Thermotoga petrophila RKU-1.</title>
        <authorList>
            <consortium name="US DOE Joint Genome Institute"/>
            <person name="Copeland A."/>
            <person name="Lucas S."/>
            <person name="Lapidus A."/>
            <person name="Barry K."/>
            <person name="Glavina del Rio T."/>
            <person name="Dalin E."/>
            <person name="Tice H."/>
            <person name="Pitluck S."/>
            <person name="Sims D."/>
            <person name="Brettin T."/>
            <person name="Bruce D."/>
            <person name="Detter J.C."/>
            <person name="Han C."/>
            <person name="Tapia R."/>
            <person name="Schmutz J."/>
            <person name="Larimer F."/>
            <person name="Land M."/>
            <person name="Hauser L."/>
            <person name="Kyrpides N."/>
            <person name="Mikhailova N."/>
            <person name="Nelson K."/>
            <person name="Gogarten J.P."/>
            <person name="Noll K."/>
            <person name="Richardson P."/>
        </authorList>
    </citation>
    <scope>NUCLEOTIDE SEQUENCE [LARGE SCALE GENOMIC DNA]</scope>
    <source>
        <strain>ATCC BAA-488 / DSM 13995 / JCM 10881 / RKU-1</strain>
    </source>
</reference>
<gene>
    <name evidence="1" type="primary">hfq</name>
    <name type="ordered locus">Tpet_0395</name>
</gene>
<proteinExistence type="inferred from homology"/>
<comment type="function">
    <text evidence="1">RNA chaperone that binds small regulatory RNA (sRNAs) and mRNAs to facilitate mRNA translational regulation in response to envelope stress, environmental stress and changes in metabolite concentrations. Also binds with high specificity to tRNAs.</text>
</comment>
<comment type="subunit">
    <text evidence="1">Homohexamer.</text>
</comment>
<comment type="similarity">
    <text evidence="1">Belongs to the Hfq family.</text>
</comment>
<accession>A5IJP8</accession>